<feature type="signal peptide" evidence="2">
    <location>
        <begin position="1"/>
        <end position="23"/>
    </location>
</feature>
<feature type="chain" id="PRO_0000043187" description="Osmotically-inducible lipoprotein B">
    <location>
        <begin position="24"/>
        <end position="72"/>
    </location>
</feature>
<feature type="lipid moiety-binding region" description="N-palmitoyl cysteine" evidence="3">
    <location>
        <position position="24"/>
    </location>
</feature>
<feature type="lipid moiety-binding region" description="S-diacylglycerol cysteine" evidence="3">
    <location>
        <position position="24"/>
    </location>
</feature>
<accession>P0ADB0</accession>
<accession>P17873</accession>
<gene>
    <name type="primary">osmB</name>
    <name type="ordered locus">SF1287</name>
    <name type="ordered locus">S1370</name>
</gene>
<reference key="1">
    <citation type="journal article" date="2002" name="Nucleic Acids Res.">
        <title>Genome sequence of Shigella flexneri 2a: insights into pathogenicity through comparison with genomes of Escherichia coli K12 and O157.</title>
        <authorList>
            <person name="Jin Q."/>
            <person name="Yuan Z."/>
            <person name="Xu J."/>
            <person name="Wang Y."/>
            <person name="Shen Y."/>
            <person name="Lu W."/>
            <person name="Wang J."/>
            <person name="Liu H."/>
            <person name="Yang J."/>
            <person name="Yang F."/>
            <person name="Zhang X."/>
            <person name="Zhang J."/>
            <person name="Yang G."/>
            <person name="Wu H."/>
            <person name="Qu D."/>
            <person name="Dong J."/>
            <person name="Sun L."/>
            <person name="Xue Y."/>
            <person name="Zhao A."/>
            <person name="Gao Y."/>
            <person name="Zhu J."/>
            <person name="Kan B."/>
            <person name="Ding K."/>
            <person name="Chen S."/>
            <person name="Cheng H."/>
            <person name="Yao Z."/>
            <person name="He B."/>
            <person name="Chen R."/>
            <person name="Ma D."/>
            <person name="Qiang B."/>
            <person name="Wen Y."/>
            <person name="Hou Y."/>
            <person name="Yu J."/>
        </authorList>
    </citation>
    <scope>NUCLEOTIDE SEQUENCE [LARGE SCALE GENOMIC DNA]</scope>
    <source>
        <strain>301 / Serotype 2a</strain>
    </source>
</reference>
<reference key="2">
    <citation type="journal article" date="2003" name="Infect. Immun.">
        <title>Complete genome sequence and comparative genomics of Shigella flexneri serotype 2a strain 2457T.</title>
        <authorList>
            <person name="Wei J."/>
            <person name="Goldberg M.B."/>
            <person name="Burland V."/>
            <person name="Venkatesan M.M."/>
            <person name="Deng W."/>
            <person name="Fournier G."/>
            <person name="Mayhew G.F."/>
            <person name="Plunkett G. III"/>
            <person name="Rose D.J."/>
            <person name="Darling A."/>
            <person name="Mau B."/>
            <person name="Perna N.T."/>
            <person name="Payne S.M."/>
            <person name="Runyen-Janecky L.J."/>
            <person name="Zhou S."/>
            <person name="Schwartz D.C."/>
            <person name="Blattner F.R."/>
        </authorList>
    </citation>
    <scope>NUCLEOTIDE SEQUENCE [LARGE SCALE GENOMIC DNA]</scope>
    <source>
        <strain>ATCC 700930 / 2457T / Serotype 2a</strain>
    </source>
</reference>
<sequence>MFVTSKKMTAAVLAITLAMSLSACSNWSKRDRNTAIGAGAGALGGAVLTDGSTLGTLGGAAVGGVIGHQVGK</sequence>
<evidence type="ECO:0000250" key="1"/>
<evidence type="ECO:0000255" key="2">
    <source>
        <dbReference type="PROSITE-ProRule" id="PRU00303"/>
    </source>
</evidence>
<evidence type="ECO:0000305" key="3"/>
<protein>
    <recommendedName>
        <fullName>Osmotically-inducible lipoprotein B</fullName>
    </recommendedName>
</protein>
<keyword id="KW-1003">Cell membrane</keyword>
<keyword id="KW-0449">Lipoprotein</keyword>
<keyword id="KW-0472">Membrane</keyword>
<keyword id="KW-0564">Palmitate</keyword>
<keyword id="KW-1185">Reference proteome</keyword>
<keyword id="KW-0732">Signal</keyword>
<name>OSMB_SHIFL</name>
<comment type="function">
    <text evidence="1">Provides resistance to osmotic stress. May be important for stationary-phase survival (By similarity).</text>
</comment>
<comment type="subcellular location">
    <subcellularLocation>
        <location evidence="3">Cell membrane</location>
        <topology evidence="3">Lipid-anchor</topology>
    </subcellularLocation>
</comment>
<dbReference type="EMBL" id="AE005674">
    <property type="protein sequence ID" value="AAN42899.1"/>
    <property type="molecule type" value="Genomic_DNA"/>
</dbReference>
<dbReference type="EMBL" id="AE014073">
    <property type="protein sequence ID" value="AAP16783.1"/>
    <property type="molecule type" value="Genomic_DNA"/>
</dbReference>
<dbReference type="RefSeq" id="NP_707192.1">
    <property type="nucleotide sequence ID" value="NC_004337.2"/>
</dbReference>
<dbReference type="RefSeq" id="WP_000498253.1">
    <property type="nucleotide sequence ID" value="NZ_WPGW01000009.1"/>
</dbReference>
<dbReference type="STRING" id="198214.SF1287"/>
<dbReference type="PaxDb" id="198214-SF1287"/>
<dbReference type="GeneID" id="1024276"/>
<dbReference type="GeneID" id="93775406"/>
<dbReference type="KEGG" id="sfl:SF1287"/>
<dbReference type="KEGG" id="sfx:S1370"/>
<dbReference type="PATRIC" id="fig|198214.7.peg.1509"/>
<dbReference type="HOGENOM" id="CLU_158447_1_2_6"/>
<dbReference type="Proteomes" id="UP000001006">
    <property type="component" value="Chromosome"/>
</dbReference>
<dbReference type="Proteomes" id="UP000002673">
    <property type="component" value="Chromosome"/>
</dbReference>
<dbReference type="GO" id="GO:0019867">
    <property type="term" value="C:outer membrane"/>
    <property type="evidence" value="ECO:0007669"/>
    <property type="project" value="InterPro"/>
</dbReference>
<dbReference type="GO" id="GO:0005886">
    <property type="term" value="C:plasma membrane"/>
    <property type="evidence" value="ECO:0007669"/>
    <property type="project" value="UniProtKB-SubCell"/>
</dbReference>
<dbReference type="InterPro" id="IPR008816">
    <property type="entry name" value="Gly_zipper_2TM_dom"/>
</dbReference>
<dbReference type="NCBIfam" id="NF007830">
    <property type="entry name" value="PRK10540.1"/>
    <property type="match status" value="1"/>
</dbReference>
<dbReference type="Pfam" id="PF05433">
    <property type="entry name" value="Rick_17kDa_Anti"/>
    <property type="match status" value="1"/>
</dbReference>
<dbReference type="PROSITE" id="PS51257">
    <property type="entry name" value="PROKAR_LIPOPROTEIN"/>
    <property type="match status" value="1"/>
</dbReference>
<organism>
    <name type="scientific">Shigella flexneri</name>
    <dbReference type="NCBI Taxonomy" id="623"/>
    <lineage>
        <taxon>Bacteria</taxon>
        <taxon>Pseudomonadati</taxon>
        <taxon>Pseudomonadota</taxon>
        <taxon>Gammaproteobacteria</taxon>
        <taxon>Enterobacterales</taxon>
        <taxon>Enterobacteriaceae</taxon>
        <taxon>Shigella</taxon>
    </lineage>
</organism>
<proteinExistence type="inferred from homology"/>